<proteinExistence type="evidence at transcript level"/>
<accession>Q4V7A9</accession>
<feature type="chain" id="PRO_0000320621" description="Microtubule-associated tyrosine carboxypeptidase 1">
    <location>
        <begin position="1"/>
        <end position="468"/>
    </location>
</feature>
<feature type="region of interest" description="Disordered" evidence="2">
    <location>
        <begin position="1"/>
        <end position="39"/>
    </location>
</feature>
<feature type="region of interest" description="Disordered" evidence="2">
    <location>
        <begin position="77"/>
        <end position="112"/>
    </location>
</feature>
<feature type="compositionally biased region" description="Polar residues" evidence="2">
    <location>
        <begin position="1"/>
        <end position="10"/>
    </location>
</feature>
<feature type="active site" description="Nucleophile" evidence="1">
    <location>
        <position position="278"/>
    </location>
</feature>
<feature type="binding site" evidence="1">
    <location>
        <position position="277"/>
    </location>
    <ligand>
        <name>Zn(2+)</name>
        <dbReference type="ChEBI" id="CHEBI:29105"/>
        <note>catalytic</note>
    </ligand>
</feature>
<feature type="binding site" evidence="1">
    <location>
        <position position="282"/>
    </location>
    <ligand>
        <name>Zn(2+)</name>
        <dbReference type="ChEBI" id="CHEBI:29105"/>
        <note>catalytic</note>
    </ligand>
</feature>
<feature type="binding site" evidence="1">
    <location>
        <position position="313"/>
    </location>
    <ligand>
        <name>Zn(2+)</name>
        <dbReference type="ChEBI" id="CHEBI:29105"/>
        <note>catalytic</note>
    </ligand>
</feature>
<name>MACA1_RAT</name>
<comment type="function">
    <text evidence="1">Tyrosine carboxypeptidase that removes the C-terminal tyrosine residue of alpha-tubulin, thereby regulating microtubule dynamics and function. Also able to remove the C-terminal phenylalanine residue of alpha-tubulin TUBA8. Recognizes adjacent tubulin dimers along the same protofilament.</text>
</comment>
<comment type="catalytic activity">
    <reaction evidence="1">
        <text>C-terminal L-alpha-aminoacyl-L-glutamyl-L-glutamyl-L-tyrosyl-[tubulin] + H2O = C-terminal L-alpha-aminoacyl-L-glutamyl-L-glutamyl-[tubulin] + L-tyrosine</text>
        <dbReference type="Rhea" id="RHEA:57444"/>
        <dbReference type="Rhea" id="RHEA-COMP:16434"/>
        <dbReference type="Rhea" id="RHEA-COMP:16435"/>
        <dbReference type="ChEBI" id="CHEBI:15377"/>
        <dbReference type="ChEBI" id="CHEBI:58315"/>
        <dbReference type="ChEBI" id="CHEBI:149554"/>
        <dbReference type="ChEBI" id="CHEBI:149555"/>
        <dbReference type="EC" id="3.4.17.17"/>
    </reaction>
    <physiologicalReaction direction="left-to-right" evidence="1">
        <dbReference type="Rhea" id="RHEA:57445"/>
    </physiologicalReaction>
</comment>
<comment type="catalytic activity">
    <reaction evidence="1">
        <text>C-terminal L-alpha-aminoacyl-L-glutamyl-L-glutamyl-L-phenylalanyl-[tubulin] + H2O = C-terminal L-alpha-aminoacyl-L-glutamyl-L-glutamyl-[tubulin] + L-phenylalanine</text>
        <dbReference type="Rhea" id="RHEA:72663"/>
        <dbReference type="Rhea" id="RHEA-COMP:16435"/>
        <dbReference type="Rhea" id="RHEA-COMP:18133"/>
        <dbReference type="ChEBI" id="CHEBI:15377"/>
        <dbReference type="ChEBI" id="CHEBI:58095"/>
        <dbReference type="ChEBI" id="CHEBI:149555"/>
        <dbReference type="ChEBI" id="CHEBI:192362"/>
    </reaction>
    <physiologicalReaction direction="left-to-right" evidence="1">
        <dbReference type="Rhea" id="RHEA:72664"/>
    </physiologicalReaction>
</comment>
<comment type="cofactor">
    <cofactor evidence="1">
        <name>Zn(2+)</name>
        <dbReference type="ChEBI" id="CHEBI:29105"/>
    </cofactor>
    <text evidence="1">Binds 1 zinc ion per subunit.</text>
</comment>
<comment type="subcellular location">
    <subcellularLocation>
        <location evidence="1">Cytoplasm</location>
        <location evidence="1">Cytoskeleton</location>
    </subcellularLocation>
    <text evidence="1">Associates with microtubules.</text>
</comment>
<comment type="domain">
    <text evidence="1">Metalloprotease with an atypical HExxxH zinc-binding motif instead of HExxH, which interrupts the active site-containing helix without affecting the integrity of the catalytic site arrangement.</text>
</comment>
<comment type="domain">
    <text evidence="1">The N-terminal disordered region enhances its anchoring on microtubules, while dampening processivity on the polymerized substrate.</text>
</comment>
<comment type="similarity">
    <text evidence="3">Belongs to the peptidase MATCAP family.</text>
</comment>
<gene>
    <name evidence="4" type="primary">Matcap1</name>
</gene>
<reference key="1">
    <citation type="journal article" date="2004" name="Genome Res.">
        <title>The status, quality, and expansion of the NIH full-length cDNA project: the Mammalian Gene Collection (MGC).</title>
        <authorList>
            <consortium name="The MGC Project Team"/>
        </authorList>
    </citation>
    <scope>NUCLEOTIDE SEQUENCE [LARGE SCALE MRNA]</scope>
    <source>
        <tissue>Testis</tissue>
    </source>
</reference>
<dbReference type="EC" id="3.4.17.17" evidence="1"/>
<dbReference type="EMBL" id="BC098045">
    <property type="protein sequence ID" value="AAH98045.1"/>
    <property type="molecule type" value="mRNA"/>
</dbReference>
<dbReference type="EMBL" id="BC098942">
    <property type="protein sequence ID" value="AAH98942.1"/>
    <property type="molecule type" value="mRNA"/>
</dbReference>
<dbReference type="RefSeq" id="NP_001037757.1">
    <property type="nucleotide sequence ID" value="NM_001044292.1"/>
</dbReference>
<dbReference type="RefSeq" id="NP_001421535.1">
    <property type="nucleotide sequence ID" value="NM_001434606.1"/>
</dbReference>
<dbReference type="RefSeq" id="XP_008770755.1">
    <property type="nucleotide sequence ID" value="XM_008772533.2"/>
</dbReference>
<dbReference type="RefSeq" id="XP_017456849.1">
    <property type="nucleotide sequence ID" value="XM_017601360.1"/>
</dbReference>
<dbReference type="RefSeq" id="XP_017456850.1">
    <property type="nucleotide sequence ID" value="XM_017601361.2"/>
</dbReference>
<dbReference type="SMR" id="Q4V7A9"/>
<dbReference type="FunCoup" id="Q4V7A9">
    <property type="interactions" value="851"/>
</dbReference>
<dbReference type="PhosphoSitePlus" id="Q4V7A9"/>
<dbReference type="PaxDb" id="10116-ENSRNOP00000020927"/>
<dbReference type="Ensembl" id="ENSRNOT00000020927.4">
    <property type="protein sequence ID" value="ENSRNOP00000020927.2"/>
    <property type="gene ID" value="ENSRNOG00000015625.4"/>
</dbReference>
<dbReference type="GeneID" id="688736"/>
<dbReference type="KEGG" id="rno:688736"/>
<dbReference type="UCSC" id="RGD:1585272">
    <property type="organism name" value="rat"/>
</dbReference>
<dbReference type="AGR" id="RGD:1585272"/>
<dbReference type="CTD" id="653319"/>
<dbReference type="RGD" id="1585272">
    <property type="gene designation" value="Matcap1"/>
</dbReference>
<dbReference type="eggNOG" id="ENOG502QQGI">
    <property type="taxonomic scope" value="Eukaryota"/>
</dbReference>
<dbReference type="GeneTree" id="ENSGT00390000004417"/>
<dbReference type="HOGENOM" id="CLU_038689_2_0_1"/>
<dbReference type="InParanoid" id="Q4V7A9"/>
<dbReference type="OMA" id="RILQPPW"/>
<dbReference type="OrthoDB" id="449345at2759"/>
<dbReference type="PhylomeDB" id="Q4V7A9"/>
<dbReference type="TreeFam" id="TF329621"/>
<dbReference type="PRO" id="PR:Q4V7A9"/>
<dbReference type="Proteomes" id="UP000002494">
    <property type="component" value="Chromosome 19"/>
</dbReference>
<dbReference type="Bgee" id="ENSRNOG00000015625">
    <property type="expression patterns" value="Expressed in testis and 14 other cell types or tissues"/>
</dbReference>
<dbReference type="GO" id="GO:0005737">
    <property type="term" value="C:cytoplasm"/>
    <property type="evidence" value="ECO:0007669"/>
    <property type="project" value="UniProtKB-KW"/>
</dbReference>
<dbReference type="GO" id="GO:0005874">
    <property type="term" value="C:microtubule"/>
    <property type="evidence" value="ECO:0000250"/>
    <property type="project" value="UniProtKB"/>
</dbReference>
<dbReference type="GO" id="GO:0046872">
    <property type="term" value="F:metal ion binding"/>
    <property type="evidence" value="ECO:0007669"/>
    <property type="project" value="UniProtKB-KW"/>
</dbReference>
<dbReference type="GO" id="GO:0004181">
    <property type="term" value="F:metallocarboxypeptidase activity"/>
    <property type="evidence" value="ECO:0000250"/>
    <property type="project" value="UniProtKB"/>
</dbReference>
<dbReference type="GO" id="GO:0106423">
    <property type="term" value="F:tubulin-tyrosine carboxypeptidase"/>
    <property type="evidence" value="ECO:0000250"/>
    <property type="project" value="UniProtKB"/>
</dbReference>
<dbReference type="GO" id="GO:0007420">
    <property type="term" value="P:brain development"/>
    <property type="evidence" value="ECO:0000250"/>
    <property type="project" value="UniProtKB"/>
</dbReference>
<dbReference type="GO" id="GO:0006508">
    <property type="term" value="P:proteolysis"/>
    <property type="evidence" value="ECO:0007669"/>
    <property type="project" value="UniProtKB-KW"/>
</dbReference>
<dbReference type="InterPro" id="IPR012548">
    <property type="entry name" value="MATCAP"/>
</dbReference>
<dbReference type="PANTHER" id="PTHR31817">
    <property type="match status" value="1"/>
</dbReference>
<dbReference type="PANTHER" id="PTHR31817:SF1">
    <property type="entry name" value="MICROTUBULE-ASSOCIATED TYROSINE CARBOXYPEPTIDASE 1"/>
    <property type="match status" value="1"/>
</dbReference>
<dbReference type="Pfam" id="PF08014">
    <property type="entry name" value="MATCAP"/>
    <property type="match status" value="1"/>
</dbReference>
<dbReference type="SMART" id="SM01154">
    <property type="entry name" value="DUF1704"/>
    <property type="match status" value="1"/>
</dbReference>
<keyword id="KW-0121">Carboxypeptidase</keyword>
<keyword id="KW-0963">Cytoplasm</keyword>
<keyword id="KW-0206">Cytoskeleton</keyword>
<keyword id="KW-0378">Hydrolase</keyword>
<keyword id="KW-0479">Metal-binding</keyword>
<keyword id="KW-0482">Metalloprotease</keyword>
<keyword id="KW-0645">Protease</keyword>
<keyword id="KW-1185">Reference proteome</keyword>
<keyword id="KW-0862">Zinc</keyword>
<protein>
    <recommendedName>
        <fullName evidence="4">Microtubule-associated tyrosine carboxypeptidase 1</fullName>
        <ecNumber evidence="1">3.4.17.17</ecNumber>
    </recommendedName>
</protein>
<evidence type="ECO:0000250" key="1">
    <source>
        <dbReference type="UniProtKB" id="Q68EN5"/>
    </source>
</evidence>
<evidence type="ECO:0000256" key="2">
    <source>
        <dbReference type="SAM" id="MobiDB-lite"/>
    </source>
</evidence>
<evidence type="ECO:0000305" key="3"/>
<evidence type="ECO:0000312" key="4">
    <source>
        <dbReference type="RGD" id="1585272"/>
    </source>
</evidence>
<sequence length="468" mass="53503">MVLDSGTQVYEQAPPSPPASSPSQHHKLKPSNRNGPPLYPWPQSLAMPLALAVPSALQHQTMWQTFSKLHLEQRSHMKRSESTYSVNSTGRRGRGKAPLGRGCDPGGGTLRPAASLPHIAKIRKDVVSGSNKSPCMLVALRPTNMDQEREKFFQSHYAYNPQFEYQEPMPMSVLEKYQEASGQFMHQAVGIIKAVLEKFGTYENFEAATGGQLLTKCQIWSIVRRYMQKEGCVGEVVVQLSEDLLSQAVMMVENSRPTLAINLTGARQYWLEGMLRHEIGTHYLRGVNNSRQPWHSTEGRQQYGLRPANPTEEGLASLHSVLFRKQPFLWRAALLYYTIHQAAHMSFRQLFQDLEQYVQDEDVRWEYCVRAKRGQTDTSLPGCFSKDQVYLDGILRILRHRQTIDFQLLTSLGKVSYEDVEQLRPHGVLDKTRVPHFMKDLDRYRQQLEHIMTTNRLDEAELGRLLPD</sequence>
<organism>
    <name type="scientific">Rattus norvegicus</name>
    <name type="common">Rat</name>
    <dbReference type="NCBI Taxonomy" id="10116"/>
    <lineage>
        <taxon>Eukaryota</taxon>
        <taxon>Metazoa</taxon>
        <taxon>Chordata</taxon>
        <taxon>Craniata</taxon>
        <taxon>Vertebrata</taxon>
        <taxon>Euteleostomi</taxon>
        <taxon>Mammalia</taxon>
        <taxon>Eutheria</taxon>
        <taxon>Euarchontoglires</taxon>
        <taxon>Glires</taxon>
        <taxon>Rodentia</taxon>
        <taxon>Myomorpha</taxon>
        <taxon>Muroidea</taxon>
        <taxon>Muridae</taxon>
        <taxon>Murinae</taxon>
        <taxon>Rattus</taxon>
    </lineage>
</organism>